<gene>
    <name evidence="10" type="primary">AP4S1</name>
</gene>
<keyword id="KW-0025">Alternative splicing</keyword>
<keyword id="KW-0333">Golgi apparatus</keyword>
<keyword id="KW-0890">Hereditary spastic paraplegia</keyword>
<keyword id="KW-0472">Membrane</keyword>
<keyword id="KW-0523">Neurodegeneration</keyword>
<keyword id="KW-0653">Protein transport</keyword>
<keyword id="KW-1267">Proteomics identification</keyword>
<keyword id="KW-1185">Reference proteome</keyword>
<keyword id="KW-0813">Transport</keyword>
<proteinExistence type="evidence at protein level"/>
<name>AP4S1_HUMAN</name>
<organism>
    <name type="scientific">Homo sapiens</name>
    <name type="common">Human</name>
    <dbReference type="NCBI Taxonomy" id="9606"/>
    <lineage>
        <taxon>Eukaryota</taxon>
        <taxon>Metazoa</taxon>
        <taxon>Chordata</taxon>
        <taxon>Craniata</taxon>
        <taxon>Vertebrata</taxon>
        <taxon>Euteleostomi</taxon>
        <taxon>Mammalia</taxon>
        <taxon>Eutheria</taxon>
        <taxon>Euarchontoglires</taxon>
        <taxon>Primates</taxon>
        <taxon>Haplorrhini</taxon>
        <taxon>Catarrhini</taxon>
        <taxon>Hominidae</taxon>
        <taxon>Homo</taxon>
    </lineage>
</organism>
<sequence>MIKFFLMVNKQGQTRLSKYYEHVDINKRTLLETEVIKSCLSRSNEQCSFIEYKDFKLIYRQYAALFIVVGVNDTENEMAIYEFIHNFVEVLDEYFSRVSELDIMFNLDKVHIILDEMVLNGCIVETNRARILAPLLILDKMSES</sequence>
<protein>
    <recommendedName>
        <fullName evidence="7">AP-4 complex subunit sigma-1</fullName>
    </recommendedName>
    <alternativeName>
        <fullName>AP-4 adaptor complex subunit sigma-1</fullName>
    </alternativeName>
    <alternativeName>
        <fullName>Adaptor-related protein complex 4 subunit sigma-1</fullName>
    </alternativeName>
    <alternativeName>
        <fullName>Sigma-1 subunit of AP-4</fullName>
    </alternativeName>
    <alternativeName>
        <fullName>Sigma-4-adaptin</fullName>
        <shortName>Sigma4-adaptin</shortName>
    </alternativeName>
</protein>
<feature type="chain" id="PRO_0000193820" description="AP-4 complex subunit sigma-1">
    <location>
        <begin position="1"/>
        <end position="144"/>
    </location>
</feature>
<feature type="splice variant" id="VSP_046364" description="In isoform 3." evidence="5">
    <original>SELDIMFNLDKVHIILDEMVLNGCIVETNRARILAPLLILDKMSES</original>
    <variation>EPIDELPKICSALEPQQTCFSPDSSSFKGAASTTPIY</variation>
    <location>
        <begin position="99"/>
        <end position="144"/>
    </location>
</feature>
<feature type="splice variant" id="VSP_040023" description="In isoform 2." evidence="4 6">
    <original>IMFNLDKVHIILDEMVLNGCIVETNRARILAPLLILDKMSES</original>
    <variation>VSFFNTVFHSTWQMHSGPYQEPIDELPKICSALEPQQTCFSPDSSSFKGAASTTPIY</variation>
    <location>
        <begin position="103"/>
        <end position="144"/>
    </location>
</feature>
<feature type="splice variant" id="VSP_046941" description="In isoform 4." evidence="5">
    <original>IMFNLDKVHIILDEMVLNGCIVETNRARILAPLLILDKMSES</original>
    <variation>VSFFNTVFHSTWQMHSGPYQTRSCSVTQAGVQRCDHGSLHPGSPGLK</variation>
    <location>
        <begin position="103"/>
        <end position="144"/>
    </location>
</feature>
<dbReference type="EMBL" id="AF155159">
    <property type="protein sequence ID" value="AAD43329.1"/>
    <property type="molecule type" value="mRNA"/>
</dbReference>
<dbReference type="EMBL" id="AB030654">
    <property type="protein sequence ID" value="BAA82970.1"/>
    <property type="molecule type" value="mRNA"/>
</dbReference>
<dbReference type="EMBL" id="BX247969">
    <property type="protein sequence ID" value="CAD62307.1"/>
    <property type="molecule type" value="mRNA"/>
</dbReference>
<dbReference type="EMBL" id="BX388185">
    <property type="status" value="NOT_ANNOTATED_CDS"/>
    <property type="molecule type" value="mRNA"/>
</dbReference>
<dbReference type="EMBL" id="BT006701">
    <property type="protein sequence ID" value="AAP35347.1"/>
    <property type="molecule type" value="mRNA"/>
</dbReference>
<dbReference type="EMBL" id="CR457100">
    <property type="protein sequence ID" value="CAG33381.1"/>
    <property type="molecule type" value="mRNA"/>
</dbReference>
<dbReference type="EMBL" id="AK304115">
    <property type="protein sequence ID" value="BAG65016.1"/>
    <property type="molecule type" value="mRNA"/>
</dbReference>
<dbReference type="EMBL" id="AL049830">
    <property type="status" value="NOT_ANNOTATED_CDS"/>
    <property type="molecule type" value="Genomic_DNA"/>
</dbReference>
<dbReference type="EMBL" id="AL121808">
    <property type="status" value="NOT_ANNOTATED_CDS"/>
    <property type="molecule type" value="Genomic_DNA"/>
</dbReference>
<dbReference type="EMBL" id="CH471078">
    <property type="protein sequence ID" value="EAW65953.1"/>
    <property type="molecule type" value="Genomic_DNA"/>
</dbReference>
<dbReference type="EMBL" id="CH471078">
    <property type="protein sequence ID" value="EAW65954.1"/>
    <property type="molecule type" value="Genomic_DNA"/>
</dbReference>
<dbReference type="EMBL" id="CH471078">
    <property type="protein sequence ID" value="EAW65955.1"/>
    <property type="molecule type" value="Genomic_DNA"/>
</dbReference>
<dbReference type="EMBL" id="BC001259">
    <property type="protein sequence ID" value="AAH01259.1"/>
    <property type="molecule type" value="mRNA"/>
</dbReference>
<dbReference type="CCDS" id="CCDS45093.1">
    <molecule id="Q9Y587-1"/>
</dbReference>
<dbReference type="CCDS" id="CCDS58309.1">
    <molecule id="Q9Y587-4"/>
</dbReference>
<dbReference type="CCDS" id="CCDS58310.1">
    <molecule id="Q9Y587-3"/>
</dbReference>
<dbReference type="CCDS" id="CCDS9642.1">
    <molecule id="Q9Y587-2"/>
</dbReference>
<dbReference type="RefSeq" id="NP_001121598.1">
    <molecule id="Q9Y587-1"/>
    <property type="nucleotide sequence ID" value="NM_001128126.3"/>
</dbReference>
<dbReference type="RefSeq" id="NP_001241655.1">
    <molecule id="Q9Y587-3"/>
    <property type="nucleotide sequence ID" value="NM_001254726.2"/>
</dbReference>
<dbReference type="RefSeq" id="NP_001241656.1">
    <molecule id="Q9Y587-4"/>
    <property type="nucleotide sequence ID" value="NM_001254727.2"/>
</dbReference>
<dbReference type="RefSeq" id="NP_001241657.1">
    <molecule id="Q9Y587-1"/>
    <property type="nucleotide sequence ID" value="NM_001254728.2"/>
</dbReference>
<dbReference type="RefSeq" id="NP_001241658.1">
    <molecule id="Q9Y587-1"/>
    <property type="nucleotide sequence ID" value="NM_001254729.2"/>
</dbReference>
<dbReference type="RefSeq" id="NP_009008.2">
    <molecule id="Q9Y587-2"/>
    <property type="nucleotide sequence ID" value="NM_007077.4"/>
</dbReference>
<dbReference type="RefSeq" id="XP_005267350.1">
    <molecule id="Q9Y587-2"/>
    <property type="nucleotide sequence ID" value="XM_005267293.6"/>
</dbReference>
<dbReference type="RefSeq" id="XP_011534673.1">
    <molecule id="Q9Y587-2"/>
    <property type="nucleotide sequence ID" value="XM_011536371.4"/>
</dbReference>
<dbReference type="RefSeq" id="XP_011534674.1">
    <molecule id="Q9Y587-2"/>
    <property type="nucleotide sequence ID" value="XM_011536372.4"/>
</dbReference>
<dbReference type="RefSeq" id="XP_054231266.1">
    <molecule id="Q9Y587-2"/>
    <property type="nucleotide sequence ID" value="XM_054375291.1"/>
</dbReference>
<dbReference type="RefSeq" id="XP_054231267.1">
    <molecule id="Q9Y587-2"/>
    <property type="nucleotide sequence ID" value="XM_054375292.1"/>
</dbReference>
<dbReference type="RefSeq" id="XP_054231268.1">
    <molecule id="Q9Y587-2"/>
    <property type="nucleotide sequence ID" value="XM_054375293.1"/>
</dbReference>
<dbReference type="SMR" id="Q9Y587"/>
<dbReference type="BioGRID" id="116325">
    <property type="interactions" value="31"/>
</dbReference>
<dbReference type="ComplexPortal" id="CPX-5151">
    <property type="entry name" value="AP-4 Adaptor complex"/>
</dbReference>
<dbReference type="CORUM" id="Q9Y587"/>
<dbReference type="FunCoup" id="Q9Y587">
    <property type="interactions" value="704"/>
</dbReference>
<dbReference type="IntAct" id="Q9Y587">
    <property type="interactions" value="25"/>
</dbReference>
<dbReference type="MINT" id="Q9Y587"/>
<dbReference type="STRING" id="9606.ENSP00000216366"/>
<dbReference type="BindingDB" id="Q9Y587"/>
<dbReference type="TCDB" id="9.B.278.1.5">
    <property type="family name" value="the organellar-targeting adaptor protein complex (o-apc) family"/>
</dbReference>
<dbReference type="GlyGen" id="Q9Y587">
    <property type="glycosylation" value="1 site, 1 O-linked glycan (1 site)"/>
</dbReference>
<dbReference type="iPTMnet" id="Q9Y587"/>
<dbReference type="PhosphoSitePlus" id="Q9Y587"/>
<dbReference type="BioMuta" id="AP4S1"/>
<dbReference type="DMDM" id="13431288"/>
<dbReference type="jPOST" id="Q9Y587"/>
<dbReference type="MassIVE" id="Q9Y587"/>
<dbReference type="PaxDb" id="9606-ENSP00000216366"/>
<dbReference type="PeptideAtlas" id="Q9Y587"/>
<dbReference type="ProteomicsDB" id="32694"/>
<dbReference type="ProteomicsDB" id="69763"/>
<dbReference type="ProteomicsDB" id="86316">
    <molecule id="Q9Y587-1"/>
</dbReference>
<dbReference type="ProteomicsDB" id="86317">
    <molecule id="Q9Y587-2"/>
</dbReference>
<dbReference type="Pumba" id="Q9Y587"/>
<dbReference type="Antibodypedia" id="51162">
    <property type="antibodies" value="29 antibodies from 10 providers"/>
</dbReference>
<dbReference type="DNASU" id="11154"/>
<dbReference type="Ensembl" id="ENST00000334725.8">
    <molecule id="Q9Y587-4"/>
    <property type="protein sequence ID" value="ENSP00000334484.4"/>
    <property type="gene ID" value="ENSG00000100478.17"/>
</dbReference>
<dbReference type="Ensembl" id="ENST00000542754.7">
    <molecule id="Q9Y587-1"/>
    <property type="protein sequence ID" value="ENSP00000438170.2"/>
    <property type="gene ID" value="ENSG00000100478.17"/>
</dbReference>
<dbReference type="Ensembl" id="ENST00000554345.6">
    <molecule id="Q9Y587-2"/>
    <property type="protein sequence ID" value="ENSP00000450768.2"/>
    <property type="gene ID" value="ENSG00000100478.17"/>
</dbReference>
<dbReference type="Ensembl" id="ENST00000554609.6">
    <molecule id="Q9Y587-3"/>
    <property type="protein sequence ID" value="ENSP00000452383.2"/>
    <property type="gene ID" value="ENSG00000100478.17"/>
</dbReference>
<dbReference type="Ensembl" id="ENST00000555417.6">
    <molecule id="Q9Y587-1"/>
    <property type="protein sequence ID" value="ENSP00000451609.2"/>
    <property type="gene ID" value="ENSG00000100478.17"/>
</dbReference>
<dbReference type="Ensembl" id="ENST00000556232.8">
    <molecule id="Q9Y587-1"/>
    <property type="protein sequence ID" value="ENSP00000451918.3"/>
    <property type="gene ID" value="ENSG00000100478.17"/>
</dbReference>
<dbReference type="Ensembl" id="ENST00000557346.6">
    <molecule id="Q9Y587-1"/>
    <property type="protein sequence ID" value="ENSP00000451479.2"/>
    <property type="gene ID" value="ENSG00000100478.17"/>
</dbReference>
<dbReference type="Ensembl" id="ENST00000713810.1">
    <molecule id="Q9Y587-1"/>
    <property type="protein sequence ID" value="ENSP00000519116.1"/>
    <property type="gene ID" value="ENSG00000100478.17"/>
</dbReference>
<dbReference type="GeneID" id="11154"/>
<dbReference type="KEGG" id="hsa:11154"/>
<dbReference type="MANE-Select" id="ENST00000542754.7">
    <property type="protein sequence ID" value="ENSP00000438170.2"/>
    <property type="RefSeq nucleotide sequence ID" value="NM_001128126.3"/>
    <property type="RefSeq protein sequence ID" value="NP_001121598.1"/>
</dbReference>
<dbReference type="UCSC" id="uc001wqw.5">
    <molecule id="Q9Y587-1"/>
    <property type="organism name" value="human"/>
</dbReference>
<dbReference type="AGR" id="HGNC:575"/>
<dbReference type="CTD" id="11154"/>
<dbReference type="DisGeNET" id="11154"/>
<dbReference type="GeneCards" id="AP4S1"/>
<dbReference type="GeneReviews" id="AP4S1"/>
<dbReference type="HGNC" id="HGNC:575">
    <property type="gene designation" value="AP4S1"/>
</dbReference>
<dbReference type="HPA" id="ENSG00000100478">
    <property type="expression patterns" value="Low tissue specificity"/>
</dbReference>
<dbReference type="MalaCards" id="AP4S1"/>
<dbReference type="MIM" id="607243">
    <property type="type" value="gene"/>
</dbReference>
<dbReference type="MIM" id="614067">
    <property type="type" value="phenotype"/>
</dbReference>
<dbReference type="neXtProt" id="NX_Q9Y587"/>
<dbReference type="OpenTargets" id="ENSG00000100478"/>
<dbReference type="Orphanet" id="280763">
    <property type="disease" value="Severe intellectual disability and progressive spastic paraplegia"/>
</dbReference>
<dbReference type="PharmGKB" id="PA24867"/>
<dbReference type="VEuPathDB" id="HostDB:ENSG00000100478"/>
<dbReference type="eggNOG" id="KOG0934">
    <property type="taxonomic scope" value="Eukaryota"/>
</dbReference>
<dbReference type="GeneTree" id="ENSGT00970000193421"/>
<dbReference type="InParanoid" id="Q9Y587"/>
<dbReference type="OMA" id="GHVVETN"/>
<dbReference type="OrthoDB" id="371463at2759"/>
<dbReference type="PAN-GO" id="Q9Y587">
    <property type="GO annotations" value="2 GO annotations based on evolutionary models"/>
</dbReference>
<dbReference type="PhylomeDB" id="Q9Y587"/>
<dbReference type="TreeFam" id="TF331913"/>
<dbReference type="PathwayCommons" id="Q9Y587"/>
<dbReference type="Reactome" id="R-HSA-432720">
    <property type="pathway name" value="Lysosome Vesicle Biogenesis"/>
</dbReference>
<dbReference type="SignaLink" id="Q9Y587"/>
<dbReference type="BioGRID-ORCS" id="11154">
    <property type="hits" value="24 hits in 1128 CRISPR screens"/>
</dbReference>
<dbReference type="ChiTaRS" id="AP4S1">
    <property type="organism name" value="human"/>
</dbReference>
<dbReference type="GeneWiki" id="AP4S1"/>
<dbReference type="GenomeRNAi" id="11154"/>
<dbReference type="Pharos" id="Q9Y587">
    <property type="development level" value="Tdark"/>
</dbReference>
<dbReference type="PRO" id="PR:Q9Y587"/>
<dbReference type="Proteomes" id="UP000005640">
    <property type="component" value="Chromosome 14"/>
</dbReference>
<dbReference type="RNAct" id="Q9Y587">
    <property type="molecule type" value="protein"/>
</dbReference>
<dbReference type="Bgee" id="ENSG00000100478">
    <property type="expression patterns" value="Expressed in endothelial cell and 206 other cell types or tissues"/>
</dbReference>
<dbReference type="ExpressionAtlas" id="Q9Y587">
    <property type="expression patterns" value="baseline and differential"/>
</dbReference>
<dbReference type="GO" id="GO:0030124">
    <property type="term" value="C:AP-4 adaptor complex"/>
    <property type="evidence" value="ECO:0000314"/>
    <property type="project" value="UniProtKB"/>
</dbReference>
<dbReference type="GO" id="GO:0031904">
    <property type="term" value="C:endosome lumen"/>
    <property type="evidence" value="ECO:0000304"/>
    <property type="project" value="Reactome"/>
</dbReference>
<dbReference type="GO" id="GO:0043231">
    <property type="term" value="C:intracellular membrane-bounded organelle"/>
    <property type="evidence" value="ECO:0000314"/>
    <property type="project" value="HPA"/>
</dbReference>
<dbReference type="GO" id="GO:0005802">
    <property type="term" value="C:trans-Golgi network"/>
    <property type="evidence" value="ECO:0000303"/>
    <property type="project" value="ComplexPortal"/>
</dbReference>
<dbReference type="GO" id="GO:0032588">
    <property type="term" value="C:trans-Golgi network membrane"/>
    <property type="evidence" value="ECO:0000304"/>
    <property type="project" value="Reactome"/>
</dbReference>
<dbReference type="GO" id="GO:0008104">
    <property type="term" value="P:protein localization"/>
    <property type="evidence" value="ECO:0000305"/>
    <property type="project" value="UniProtKB"/>
</dbReference>
<dbReference type="GO" id="GO:0006605">
    <property type="term" value="P:protein targeting"/>
    <property type="evidence" value="ECO:0000305"/>
    <property type="project" value="UniProtKB"/>
</dbReference>
<dbReference type="GO" id="GO:0015031">
    <property type="term" value="P:protein transport"/>
    <property type="evidence" value="ECO:0007669"/>
    <property type="project" value="UniProtKB-KW"/>
</dbReference>
<dbReference type="GO" id="GO:0016192">
    <property type="term" value="P:vesicle-mediated transport"/>
    <property type="evidence" value="ECO:0000318"/>
    <property type="project" value="GO_Central"/>
</dbReference>
<dbReference type="CDD" id="cd14832">
    <property type="entry name" value="AP4_sigma"/>
    <property type="match status" value="1"/>
</dbReference>
<dbReference type="FunFam" id="3.30.450.60:FF:000010">
    <property type="entry name" value="AP complex subunit sigma"/>
    <property type="match status" value="1"/>
</dbReference>
<dbReference type="Gene3D" id="3.30.450.60">
    <property type="match status" value="1"/>
</dbReference>
<dbReference type="InterPro" id="IPR016635">
    <property type="entry name" value="AP_complex_ssu"/>
</dbReference>
<dbReference type="InterPro" id="IPR022775">
    <property type="entry name" value="AP_mu_sigma_su"/>
</dbReference>
<dbReference type="InterPro" id="IPR011012">
    <property type="entry name" value="Longin-like_dom_sf"/>
</dbReference>
<dbReference type="PANTHER" id="PTHR11753">
    <property type="entry name" value="ADAPTOR COMPLEXES SMALL SUBUNIT FAMILY"/>
    <property type="match status" value="1"/>
</dbReference>
<dbReference type="Pfam" id="PF01217">
    <property type="entry name" value="Clat_adaptor_s"/>
    <property type="match status" value="1"/>
</dbReference>
<dbReference type="PIRSF" id="PIRSF015588">
    <property type="entry name" value="AP_complex_sigma"/>
    <property type="match status" value="1"/>
</dbReference>
<dbReference type="SUPFAM" id="SSF64356">
    <property type="entry name" value="SNARE-like"/>
    <property type="match status" value="1"/>
</dbReference>
<accession>Q9Y587</accession>
<accession>G3V2N8</accession>
<accession>Q6IAQ4</accession>
<accession>Q86U36</accession>
<accession>Q9BVE7</accession>
<comment type="function">
    <text evidence="1 2 8 9">Component of the adaptor protein complex 4 (AP-4). Adaptor protein complexes are vesicle coat components involved both in vesicle formation and cargo selection. They control the vesicular transport of proteins in different trafficking pathways (PubMed:10066790, PubMed:10436028). AP-4 forms a non clathrin-associated coat on vesicles departing the trans-Golgi network (TGN) and may be involved in the targeting of proteins from the trans-Golgi network (TGN) to the endosomal-lysosomal system. It is also involved in protein sorting to the basolateral membrane in epithelial cells and the proper asymmetric localization of somatodendritic proteins in neurons. AP-4 is involved in the recognition and binding of tyrosine-based sorting signals found in the cytoplasmic part of cargos, but may also recognize other types of sorting signal (Probable).</text>
</comment>
<comment type="subunit">
    <text evidence="1 2">Adaptor protein complex 4 (AP-4) is a heterotetramer composed of two large adaptins (epsilon-type subunit AP4E1 and beta-type subunit AP4B1), a medium adaptin (mu-type subunit AP4M1) and a small adaptin (sigma-type AP4S1).</text>
</comment>
<comment type="subcellular location">
    <subcellularLocation>
        <location evidence="9">Golgi apparatus</location>
        <location evidence="9">trans-Golgi network membrane</location>
        <topology evidence="7">Peripheral membrane protein</topology>
    </subcellularLocation>
</comment>
<comment type="alternative products">
    <event type="alternative splicing"/>
    <isoform>
        <id>Q9Y587-1</id>
        <name>1</name>
        <sequence type="displayed"/>
    </isoform>
    <isoform>
        <id>Q9Y587-2</id>
        <name>2</name>
        <sequence type="described" ref="VSP_040023"/>
    </isoform>
    <isoform>
        <id>Q9Y587-3</id>
        <name>3</name>
        <sequence type="described" ref="VSP_046364"/>
    </isoform>
    <isoform>
        <id>Q9Y587-4</id>
        <name>4</name>
        <sequence type="described" ref="VSP_046941"/>
    </isoform>
</comment>
<comment type="tissue specificity">
    <text>Widely expressed.</text>
</comment>
<comment type="disease" evidence="3">
    <disease id="DI-03146">
        <name>Spastic paraplegia 52, autosomal recessive</name>
        <acronym>SPG52</acronym>
        <description>A form of spastic paraplegia, a neurodegenerative disorder characterized by a slow, gradual, progressive weakness and spasticity of the lower limbs. SPG52 is characterized by neonatal hypotonia that progresses to hypertonia and spasticity, and severe intellectual disability with poor or absent speech development. Some patients may have seizures.</description>
        <dbReference type="MIM" id="614067"/>
    </disease>
    <text>The disease is caused by variants affecting the gene represented in this entry.</text>
</comment>
<comment type="similarity">
    <text evidence="7">Belongs to the adaptor complexes small subunit family.</text>
</comment>
<evidence type="ECO:0000269" key="1">
    <source>
    </source>
</evidence>
<evidence type="ECO:0000269" key="2">
    <source>
    </source>
</evidence>
<evidence type="ECO:0000269" key="3">
    <source>
    </source>
</evidence>
<evidence type="ECO:0000303" key="4">
    <source>
    </source>
</evidence>
<evidence type="ECO:0000303" key="5">
    <source ref="3"/>
</evidence>
<evidence type="ECO:0000303" key="6">
    <source ref="4"/>
</evidence>
<evidence type="ECO:0000305" key="7"/>
<evidence type="ECO:0000305" key="8">
    <source>
    </source>
</evidence>
<evidence type="ECO:0000305" key="9">
    <source>
    </source>
</evidence>
<evidence type="ECO:0000312" key="10">
    <source>
        <dbReference type="HGNC" id="HGNC:575"/>
    </source>
</evidence>
<reference key="1">
    <citation type="journal article" date="1999" name="Mol. Biol. Cell">
        <title>Characterization of a fourth adaptor-related protein complex.</title>
        <authorList>
            <person name="Hirst J."/>
            <person name="Bright N.A."/>
            <person name="Rous B."/>
            <person name="Robinson M.S."/>
        </authorList>
    </citation>
    <scope>NUCLEOTIDE SEQUENCE [MRNA] (ISOFORM 1)</scope>
    <scope>FUNCTION</scope>
    <scope>SUBUNIT</scope>
    <scope>SUBCELLULAR LOCATION</scope>
    <scope>TOPOLOGY</scope>
    <source>
        <tissue>Placenta</tissue>
    </source>
</reference>
<reference key="2">
    <citation type="submission" date="1999-07" db="EMBL/GenBank/DDBJ databases">
        <title>Identification and characterization of epsilon-adaptin that constitutes AP-4 clathrin adaptor-related complex.</title>
        <authorList>
            <person name="Takatsu H."/>
            <person name="Sakurai M."/>
            <person name="Shiba Y."/>
            <person name="Yoshida Y."/>
            <person name="Nakayama K."/>
        </authorList>
    </citation>
    <scope>NUCLEOTIDE SEQUENCE [MRNA] (ISOFORM 1)</scope>
</reference>
<reference key="3">
    <citation type="submission" date="2003-04" db="EMBL/GenBank/DDBJ databases">
        <title>Full-length cDNA libraries and normalization.</title>
        <authorList>
            <person name="Li W.B."/>
            <person name="Gruber C."/>
            <person name="Jessee J."/>
            <person name="Polayes D."/>
        </authorList>
    </citation>
    <scope>NUCLEOTIDE SEQUENCE [LARGE SCALE MRNA] (ISOFORMS 3 AND 4)</scope>
    <source>
        <tissue>B-cell</tissue>
        <tissue>Fetal brain</tissue>
    </source>
</reference>
<reference key="4">
    <citation type="submission" date="2003-05" db="EMBL/GenBank/DDBJ databases">
        <title>Cloning of human full-length CDSs in BD Creator(TM) System Donor vector.</title>
        <authorList>
            <person name="Kalnine N."/>
            <person name="Chen X."/>
            <person name="Rolfs A."/>
            <person name="Halleck A."/>
            <person name="Hines L."/>
            <person name="Eisenstein S."/>
            <person name="Koundinya M."/>
            <person name="Raphael J."/>
            <person name="Moreira D."/>
            <person name="Kelley T."/>
            <person name="LaBaer J."/>
            <person name="Lin Y."/>
            <person name="Phelan M."/>
            <person name="Farmer A."/>
        </authorList>
    </citation>
    <scope>NUCLEOTIDE SEQUENCE [LARGE SCALE MRNA] (ISOFORM 2)</scope>
</reference>
<reference key="5">
    <citation type="submission" date="2004-06" db="EMBL/GenBank/DDBJ databases">
        <title>Cloning of human full open reading frames in Gateway(TM) system entry vector (pDONR201).</title>
        <authorList>
            <person name="Ebert L."/>
            <person name="Schick M."/>
            <person name="Neubert P."/>
            <person name="Schatten R."/>
            <person name="Henze S."/>
            <person name="Korn B."/>
        </authorList>
    </citation>
    <scope>NUCLEOTIDE SEQUENCE [LARGE SCALE MRNA] (ISOFORM 1)</scope>
</reference>
<reference key="6">
    <citation type="journal article" date="2004" name="Nat. Genet.">
        <title>Complete sequencing and characterization of 21,243 full-length human cDNAs.</title>
        <authorList>
            <person name="Ota T."/>
            <person name="Suzuki Y."/>
            <person name="Nishikawa T."/>
            <person name="Otsuki T."/>
            <person name="Sugiyama T."/>
            <person name="Irie R."/>
            <person name="Wakamatsu A."/>
            <person name="Hayashi K."/>
            <person name="Sato H."/>
            <person name="Nagai K."/>
            <person name="Kimura K."/>
            <person name="Makita H."/>
            <person name="Sekine M."/>
            <person name="Obayashi M."/>
            <person name="Nishi T."/>
            <person name="Shibahara T."/>
            <person name="Tanaka T."/>
            <person name="Ishii S."/>
            <person name="Yamamoto J."/>
            <person name="Saito K."/>
            <person name="Kawai Y."/>
            <person name="Isono Y."/>
            <person name="Nakamura Y."/>
            <person name="Nagahari K."/>
            <person name="Murakami K."/>
            <person name="Yasuda T."/>
            <person name="Iwayanagi T."/>
            <person name="Wagatsuma M."/>
            <person name="Shiratori A."/>
            <person name="Sudo H."/>
            <person name="Hosoiri T."/>
            <person name="Kaku Y."/>
            <person name="Kodaira H."/>
            <person name="Kondo H."/>
            <person name="Sugawara M."/>
            <person name="Takahashi M."/>
            <person name="Kanda K."/>
            <person name="Yokoi T."/>
            <person name="Furuya T."/>
            <person name="Kikkawa E."/>
            <person name="Omura Y."/>
            <person name="Abe K."/>
            <person name="Kamihara K."/>
            <person name="Katsuta N."/>
            <person name="Sato K."/>
            <person name="Tanikawa M."/>
            <person name="Yamazaki M."/>
            <person name="Ninomiya K."/>
            <person name="Ishibashi T."/>
            <person name="Yamashita H."/>
            <person name="Murakawa K."/>
            <person name="Fujimori K."/>
            <person name="Tanai H."/>
            <person name="Kimata M."/>
            <person name="Watanabe M."/>
            <person name="Hiraoka S."/>
            <person name="Chiba Y."/>
            <person name="Ishida S."/>
            <person name="Ono Y."/>
            <person name="Takiguchi S."/>
            <person name="Watanabe S."/>
            <person name="Yosida M."/>
            <person name="Hotuta T."/>
            <person name="Kusano J."/>
            <person name="Kanehori K."/>
            <person name="Takahashi-Fujii A."/>
            <person name="Hara H."/>
            <person name="Tanase T.-O."/>
            <person name="Nomura Y."/>
            <person name="Togiya S."/>
            <person name="Komai F."/>
            <person name="Hara R."/>
            <person name="Takeuchi K."/>
            <person name="Arita M."/>
            <person name="Imose N."/>
            <person name="Musashino K."/>
            <person name="Yuuki H."/>
            <person name="Oshima A."/>
            <person name="Sasaki N."/>
            <person name="Aotsuka S."/>
            <person name="Yoshikawa Y."/>
            <person name="Matsunawa H."/>
            <person name="Ichihara T."/>
            <person name="Shiohata N."/>
            <person name="Sano S."/>
            <person name="Moriya S."/>
            <person name="Momiyama H."/>
            <person name="Satoh N."/>
            <person name="Takami S."/>
            <person name="Terashima Y."/>
            <person name="Suzuki O."/>
            <person name="Nakagawa S."/>
            <person name="Senoh A."/>
            <person name="Mizoguchi H."/>
            <person name="Goto Y."/>
            <person name="Shimizu F."/>
            <person name="Wakebe H."/>
            <person name="Hishigaki H."/>
            <person name="Watanabe T."/>
            <person name="Sugiyama A."/>
            <person name="Takemoto M."/>
            <person name="Kawakami B."/>
            <person name="Yamazaki M."/>
            <person name="Watanabe K."/>
            <person name="Kumagai A."/>
            <person name="Itakura S."/>
            <person name="Fukuzumi Y."/>
            <person name="Fujimori Y."/>
            <person name="Komiyama M."/>
            <person name="Tashiro H."/>
            <person name="Tanigami A."/>
            <person name="Fujiwara T."/>
            <person name="Ono T."/>
            <person name="Yamada K."/>
            <person name="Fujii Y."/>
            <person name="Ozaki K."/>
            <person name="Hirao M."/>
            <person name="Ohmori Y."/>
            <person name="Kawabata A."/>
            <person name="Hikiji T."/>
            <person name="Kobatake N."/>
            <person name="Inagaki H."/>
            <person name="Ikema Y."/>
            <person name="Okamoto S."/>
            <person name="Okitani R."/>
            <person name="Kawakami T."/>
            <person name="Noguchi S."/>
            <person name="Itoh T."/>
            <person name="Shigeta K."/>
            <person name="Senba T."/>
            <person name="Matsumura K."/>
            <person name="Nakajima Y."/>
            <person name="Mizuno T."/>
            <person name="Morinaga M."/>
            <person name="Sasaki M."/>
            <person name="Togashi T."/>
            <person name="Oyama M."/>
            <person name="Hata H."/>
            <person name="Watanabe M."/>
            <person name="Komatsu T."/>
            <person name="Mizushima-Sugano J."/>
            <person name="Satoh T."/>
            <person name="Shirai Y."/>
            <person name="Takahashi Y."/>
            <person name="Nakagawa K."/>
            <person name="Okumura K."/>
            <person name="Nagase T."/>
            <person name="Nomura N."/>
            <person name="Kikuchi H."/>
            <person name="Masuho Y."/>
            <person name="Yamashita R."/>
            <person name="Nakai K."/>
            <person name="Yada T."/>
            <person name="Nakamura Y."/>
            <person name="Ohara O."/>
            <person name="Isogai T."/>
            <person name="Sugano S."/>
        </authorList>
    </citation>
    <scope>NUCLEOTIDE SEQUENCE [LARGE SCALE MRNA] (ISOFORM 1)</scope>
    <source>
        <tissue>Trachea</tissue>
    </source>
</reference>
<reference key="7">
    <citation type="journal article" date="2003" name="Nature">
        <title>The DNA sequence and analysis of human chromosome 14.</title>
        <authorList>
            <person name="Heilig R."/>
            <person name="Eckenberg R."/>
            <person name="Petit J.-L."/>
            <person name="Fonknechten N."/>
            <person name="Da Silva C."/>
            <person name="Cattolico L."/>
            <person name="Levy M."/>
            <person name="Barbe V."/>
            <person name="De Berardinis V."/>
            <person name="Ureta-Vidal A."/>
            <person name="Pelletier E."/>
            <person name="Vico V."/>
            <person name="Anthouard V."/>
            <person name="Rowen L."/>
            <person name="Madan A."/>
            <person name="Qin S."/>
            <person name="Sun H."/>
            <person name="Du H."/>
            <person name="Pepin K."/>
            <person name="Artiguenave F."/>
            <person name="Robert C."/>
            <person name="Cruaud C."/>
            <person name="Bruels T."/>
            <person name="Jaillon O."/>
            <person name="Friedlander L."/>
            <person name="Samson G."/>
            <person name="Brottier P."/>
            <person name="Cure S."/>
            <person name="Segurens B."/>
            <person name="Aniere F."/>
            <person name="Samain S."/>
            <person name="Crespeau H."/>
            <person name="Abbasi N."/>
            <person name="Aiach N."/>
            <person name="Boscus D."/>
            <person name="Dickhoff R."/>
            <person name="Dors M."/>
            <person name="Dubois I."/>
            <person name="Friedman C."/>
            <person name="Gouyvenoux M."/>
            <person name="James R."/>
            <person name="Madan A."/>
            <person name="Mairey-Estrada B."/>
            <person name="Mangenot S."/>
            <person name="Martins N."/>
            <person name="Menard M."/>
            <person name="Oztas S."/>
            <person name="Ratcliffe A."/>
            <person name="Shaffer T."/>
            <person name="Trask B."/>
            <person name="Vacherie B."/>
            <person name="Bellemere C."/>
            <person name="Belser C."/>
            <person name="Besnard-Gonnet M."/>
            <person name="Bartol-Mavel D."/>
            <person name="Boutard M."/>
            <person name="Briez-Silla S."/>
            <person name="Combette S."/>
            <person name="Dufosse-Laurent V."/>
            <person name="Ferron C."/>
            <person name="Lechaplais C."/>
            <person name="Louesse C."/>
            <person name="Muselet D."/>
            <person name="Magdelenat G."/>
            <person name="Pateau E."/>
            <person name="Petit E."/>
            <person name="Sirvain-Trukniewicz P."/>
            <person name="Trybou A."/>
            <person name="Vega-Czarny N."/>
            <person name="Bataille E."/>
            <person name="Bluet E."/>
            <person name="Bordelais I."/>
            <person name="Dubois M."/>
            <person name="Dumont C."/>
            <person name="Guerin T."/>
            <person name="Haffray S."/>
            <person name="Hammadi R."/>
            <person name="Muanga J."/>
            <person name="Pellouin V."/>
            <person name="Robert D."/>
            <person name="Wunderle E."/>
            <person name="Gauguet G."/>
            <person name="Roy A."/>
            <person name="Sainte-Marthe L."/>
            <person name="Verdier J."/>
            <person name="Verdier-Discala C."/>
            <person name="Hillier L.W."/>
            <person name="Fulton L."/>
            <person name="McPherson J."/>
            <person name="Matsuda F."/>
            <person name="Wilson R."/>
            <person name="Scarpelli C."/>
            <person name="Gyapay G."/>
            <person name="Wincker P."/>
            <person name="Saurin W."/>
            <person name="Quetier F."/>
            <person name="Waterston R."/>
            <person name="Hood L."/>
            <person name="Weissenbach J."/>
        </authorList>
    </citation>
    <scope>NUCLEOTIDE SEQUENCE [LARGE SCALE GENOMIC DNA]</scope>
</reference>
<reference key="8">
    <citation type="submission" date="2005-09" db="EMBL/GenBank/DDBJ databases">
        <authorList>
            <person name="Mural R.J."/>
            <person name="Istrail S."/>
            <person name="Sutton G.G."/>
            <person name="Florea L."/>
            <person name="Halpern A.L."/>
            <person name="Mobarry C.M."/>
            <person name="Lippert R."/>
            <person name="Walenz B."/>
            <person name="Shatkay H."/>
            <person name="Dew I."/>
            <person name="Miller J.R."/>
            <person name="Flanigan M.J."/>
            <person name="Edwards N.J."/>
            <person name="Bolanos R."/>
            <person name="Fasulo D."/>
            <person name="Halldorsson B.V."/>
            <person name="Hannenhalli S."/>
            <person name="Turner R."/>
            <person name="Yooseph S."/>
            <person name="Lu F."/>
            <person name="Nusskern D.R."/>
            <person name="Shue B.C."/>
            <person name="Zheng X.H."/>
            <person name="Zhong F."/>
            <person name="Delcher A.L."/>
            <person name="Huson D.H."/>
            <person name="Kravitz S.A."/>
            <person name="Mouchard L."/>
            <person name="Reinert K."/>
            <person name="Remington K.A."/>
            <person name="Clark A.G."/>
            <person name="Waterman M.S."/>
            <person name="Eichler E.E."/>
            <person name="Adams M.D."/>
            <person name="Hunkapiller M.W."/>
            <person name="Myers E.W."/>
            <person name="Venter J.C."/>
        </authorList>
    </citation>
    <scope>NUCLEOTIDE SEQUENCE [LARGE SCALE GENOMIC DNA]</scope>
</reference>
<reference key="9">
    <citation type="journal article" date="2004" name="Genome Res.">
        <title>The status, quality, and expansion of the NIH full-length cDNA project: the Mammalian Gene Collection (MGC).</title>
        <authorList>
            <consortium name="The MGC Project Team"/>
        </authorList>
    </citation>
    <scope>NUCLEOTIDE SEQUENCE [LARGE SCALE MRNA] (ISOFORM 2)</scope>
    <source>
        <tissue>Placenta</tissue>
    </source>
</reference>
<reference key="10">
    <citation type="journal article" date="1999" name="J. Biol. Chem.">
        <title>AP-4, a novel protein complex related to clathrin adaptors.</title>
        <authorList>
            <person name="Dell'Angelica E.C."/>
            <person name="Mullins C."/>
            <person name="Bonifacino J.S."/>
        </authorList>
    </citation>
    <scope>FUNCTION</scope>
    <scope>SUBUNIT</scope>
</reference>
<reference key="11">
    <citation type="journal article" date="2011" name="Am. J. Hum. Genet.">
        <title>Adaptor protein complex 4 deficiency causes severe autosomal-recessive intellectual disability, progressive spastic paraplegia, shy character, and short stature.</title>
        <authorList>
            <person name="Abou Jamra R."/>
            <person name="Philippe O."/>
            <person name="Raas-Rothschild A."/>
            <person name="Eck S.H."/>
            <person name="Graf E."/>
            <person name="Buchert R."/>
            <person name="Borck G."/>
            <person name="Ekici A."/>
            <person name="Brockschmidt F.F."/>
            <person name="Nothen M.M."/>
            <person name="Munnich A."/>
            <person name="Strom T.M."/>
            <person name="Reis A."/>
            <person name="Colleaux L."/>
        </authorList>
    </citation>
    <scope>INVOLVEMENT IN SPG52</scope>
</reference>